<name>YTRC_BACSU</name>
<gene>
    <name type="primary">ytrC</name>
    <name type="ordered locus">BSU30440</name>
</gene>
<proteinExistence type="evidence at transcript level"/>
<dbReference type="EMBL" id="AF008220">
    <property type="protein sequence ID" value="AAC00249.1"/>
    <property type="molecule type" value="Genomic_DNA"/>
</dbReference>
<dbReference type="EMBL" id="AL009126">
    <property type="protein sequence ID" value="CAB15022.1"/>
    <property type="molecule type" value="Genomic_DNA"/>
</dbReference>
<dbReference type="PIR" id="A70000">
    <property type="entry name" value="A70000"/>
</dbReference>
<dbReference type="RefSeq" id="NP_390922.1">
    <property type="nucleotide sequence ID" value="NC_000964.3"/>
</dbReference>
<dbReference type="RefSeq" id="WP_003246175.1">
    <property type="nucleotide sequence ID" value="NZ_OZ025638.1"/>
</dbReference>
<dbReference type="FunCoup" id="O34898">
    <property type="interactions" value="167"/>
</dbReference>
<dbReference type="STRING" id="224308.BSU30440"/>
<dbReference type="TCDB" id="3.A.1.153.1">
    <property type="family name" value="the atp-binding cassette (abc) superfamily"/>
</dbReference>
<dbReference type="PaxDb" id="224308-BSU30440"/>
<dbReference type="EnsemblBacteria" id="CAB15022">
    <property type="protein sequence ID" value="CAB15022"/>
    <property type="gene ID" value="BSU_30440"/>
</dbReference>
<dbReference type="GeneID" id="937243"/>
<dbReference type="KEGG" id="bsu:BSU30440"/>
<dbReference type="PATRIC" id="fig|224308.179.peg.3301"/>
<dbReference type="eggNOG" id="ENOG5033Q9P">
    <property type="taxonomic scope" value="Bacteria"/>
</dbReference>
<dbReference type="InParanoid" id="O34898"/>
<dbReference type="OrthoDB" id="2912723at2"/>
<dbReference type="BioCyc" id="BSUB:BSU30440-MONOMER"/>
<dbReference type="Proteomes" id="UP000001570">
    <property type="component" value="Chromosome"/>
</dbReference>
<dbReference type="GO" id="GO:0005886">
    <property type="term" value="C:plasma membrane"/>
    <property type="evidence" value="ECO:0007669"/>
    <property type="project" value="UniProtKB-SubCell"/>
</dbReference>
<dbReference type="GO" id="GO:0140359">
    <property type="term" value="F:ABC-type transporter activity"/>
    <property type="evidence" value="ECO:0007669"/>
    <property type="project" value="InterPro"/>
</dbReference>
<dbReference type="InterPro" id="IPR053046">
    <property type="entry name" value="ABC-5_transporter"/>
</dbReference>
<dbReference type="InterPro" id="IPR032688">
    <property type="entry name" value="ABC2_NosY/YtrC-like"/>
</dbReference>
<dbReference type="InterPro" id="IPR023264">
    <property type="entry name" value="ABC_transptr_acetoin_YtrC/YtrD"/>
</dbReference>
<dbReference type="PANTHER" id="PTHR39177">
    <property type="entry name" value="ABC TRANSPORTER PERMEASE YTRC-RELATED"/>
    <property type="match status" value="1"/>
</dbReference>
<dbReference type="PANTHER" id="PTHR39177:SF1">
    <property type="entry name" value="ABC TRANSPORTER PERMEASE YTRC-RELATED"/>
    <property type="match status" value="1"/>
</dbReference>
<dbReference type="Pfam" id="PF12679">
    <property type="entry name" value="ABC2_membrane_2"/>
    <property type="match status" value="1"/>
</dbReference>
<dbReference type="PRINTS" id="PR02026">
    <property type="entry name" value="YTRCYTRDABC"/>
</dbReference>
<organism>
    <name type="scientific">Bacillus subtilis (strain 168)</name>
    <dbReference type="NCBI Taxonomy" id="224308"/>
    <lineage>
        <taxon>Bacteria</taxon>
        <taxon>Bacillati</taxon>
        <taxon>Bacillota</taxon>
        <taxon>Bacilli</taxon>
        <taxon>Bacillales</taxon>
        <taxon>Bacillaceae</taxon>
        <taxon>Bacillus</taxon>
    </lineage>
</organism>
<keyword id="KW-1003">Cell membrane</keyword>
<keyword id="KW-0472">Membrane</keyword>
<keyword id="KW-1185">Reference proteome</keyword>
<keyword id="KW-0812">Transmembrane</keyword>
<keyword id="KW-1133">Transmembrane helix</keyword>
<keyword id="KW-0813">Transport</keyword>
<sequence length="328" mass="36951">MVDRGLLYREWKQNQVVILLSIAFLVLANPLSIVNTYLSYQGCLDRQDPQYCDFIVNYSISNLIDINWVPGVILAVCFLGMERSKGTMDFILSLPYNRSQIFQTKFWLGGFVIVLSQLIGFLLAWLLILVYNPEHVYFFEHSSIGVIVISFMAFSLVMAAGALTGNAFAQLLTAFSAAILPYLIIALPVGNLEVVFGANIWEIFPSPESYFSLASNLSNLVPISYVVNEWLINSKYLLLIPAVMSMLFYLIGFISFKKLPSERNGHFFLWNRLDRPVQILVMAFGILGFGLFGYYTGHSIIGYILGMIIGAVAGFFVSYFSIYKKTKV</sequence>
<comment type="function">
    <text evidence="2">Part of the ABC transporter complex YtrBCDEF that plays a role in acetoin utilization during stationary phase and sporulation.</text>
</comment>
<comment type="subunit">
    <text evidence="3">The complex is composed of 2 ATP-binding proteins (YtrB and YtrE), 2 transmembrane proteins (YtrC and YtrD) and a solute-binding protein (YtrF).</text>
</comment>
<comment type="subcellular location">
    <subcellularLocation>
        <location evidence="3">Cell membrane</location>
        <topology evidence="3">Multi-pass membrane protein</topology>
    </subcellularLocation>
</comment>
<comment type="developmental stage">
    <text evidence="2">Expressed early in the stationary phase.</text>
</comment>
<comment type="induction">
    <text evidence="2">Negatively regulated by YtrA.</text>
</comment>
<comment type="similarity">
    <text evidence="3">Belongs to the ABC-5 integral membrane protein family.</text>
</comment>
<feature type="chain" id="PRO_0000360814" description="Probable ABC transporter permease YtrC">
    <location>
        <begin position="1"/>
        <end position="328"/>
    </location>
</feature>
<feature type="transmembrane region" description="Helical" evidence="1">
    <location>
        <begin position="16"/>
        <end position="36"/>
    </location>
</feature>
<feature type="transmembrane region" description="Helical" evidence="1">
    <location>
        <begin position="60"/>
        <end position="80"/>
    </location>
</feature>
<feature type="transmembrane region" description="Helical" evidence="1">
    <location>
        <begin position="110"/>
        <end position="130"/>
    </location>
</feature>
<feature type="transmembrane region" description="Helical" evidence="1">
    <location>
        <begin position="144"/>
        <end position="164"/>
    </location>
</feature>
<feature type="transmembrane region" description="Helical" evidence="1">
    <location>
        <begin position="167"/>
        <end position="187"/>
    </location>
</feature>
<feature type="transmembrane region" description="Helical" evidence="1">
    <location>
        <begin position="236"/>
        <end position="256"/>
    </location>
</feature>
<feature type="transmembrane region" description="Helical" evidence="1">
    <location>
        <begin position="277"/>
        <end position="297"/>
    </location>
</feature>
<feature type="transmembrane region" description="Helical" evidence="1">
    <location>
        <begin position="300"/>
        <end position="320"/>
    </location>
</feature>
<evidence type="ECO:0000255" key="1"/>
<evidence type="ECO:0000269" key="2">
    <source>
    </source>
</evidence>
<evidence type="ECO:0000305" key="3"/>
<reference key="1">
    <citation type="journal article" date="1997" name="Microbiology">
        <title>Sequencing and functional annotation of the Bacillus subtilis genes in the 200 kb rrnB-dnaB region.</title>
        <authorList>
            <person name="Lapidus A."/>
            <person name="Galleron N."/>
            <person name="Sorokin A."/>
            <person name="Ehrlich S.D."/>
        </authorList>
    </citation>
    <scope>NUCLEOTIDE SEQUENCE [GENOMIC DNA]</scope>
    <source>
        <strain>168</strain>
    </source>
</reference>
<reference key="2">
    <citation type="journal article" date="1997" name="Nature">
        <title>The complete genome sequence of the Gram-positive bacterium Bacillus subtilis.</title>
        <authorList>
            <person name="Kunst F."/>
            <person name="Ogasawara N."/>
            <person name="Moszer I."/>
            <person name="Albertini A.M."/>
            <person name="Alloni G."/>
            <person name="Azevedo V."/>
            <person name="Bertero M.G."/>
            <person name="Bessieres P."/>
            <person name="Bolotin A."/>
            <person name="Borchert S."/>
            <person name="Borriss R."/>
            <person name="Boursier L."/>
            <person name="Brans A."/>
            <person name="Braun M."/>
            <person name="Brignell S.C."/>
            <person name="Bron S."/>
            <person name="Brouillet S."/>
            <person name="Bruschi C.V."/>
            <person name="Caldwell B."/>
            <person name="Capuano V."/>
            <person name="Carter N.M."/>
            <person name="Choi S.-K."/>
            <person name="Codani J.-J."/>
            <person name="Connerton I.F."/>
            <person name="Cummings N.J."/>
            <person name="Daniel R.A."/>
            <person name="Denizot F."/>
            <person name="Devine K.M."/>
            <person name="Duesterhoeft A."/>
            <person name="Ehrlich S.D."/>
            <person name="Emmerson P.T."/>
            <person name="Entian K.-D."/>
            <person name="Errington J."/>
            <person name="Fabret C."/>
            <person name="Ferrari E."/>
            <person name="Foulger D."/>
            <person name="Fritz C."/>
            <person name="Fujita M."/>
            <person name="Fujita Y."/>
            <person name="Fuma S."/>
            <person name="Galizzi A."/>
            <person name="Galleron N."/>
            <person name="Ghim S.-Y."/>
            <person name="Glaser P."/>
            <person name="Goffeau A."/>
            <person name="Golightly E.J."/>
            <person name="Grandi G."/>
            <person name="Guiseppi G."/>
            <person name="Guy B.J."/>
            <person name="Haga K."/>
            <person name="Haiech J."/>
            <person name="Harwood C.R."/>
            <person name="Henaut A."/>
            <person name="Hilbert H."/>
            <person name="Holsappel S."/>
            <person name="Hosono S."/>
            <person name="Hullo M.-F."/>
            <person name="Itaya M."/>
            <person name="Jones L.-M."/>
            <person name="Joris B."/>
            <person name="Karamata D."/>
            <person name="Kasahara Y."/>
            <person name="Klaerr-Blanchard M."/>
            <person name="Klein C."/>
            <person name="Kobayashi Y."/>
            <person name="Koetter P."/>
            <person name="Koningstein G."/>
            <person name="Krogh S."/>
            <person name="Kumano M."/>
            <person name="Kurita K."/>
            <person name="Lapidus A."/>
            <person name="Lardinois S."/>
            <person name="Lauber J."/>
            <person name="Lazarevic V."/>
            <person name="Lee S.-M."/>
            <person name="Levine A."/>
            <person name="Liu H."/>
            <person name="Masuda S."/>
            <person name="Mauel C."/>
            <person name="Medigue C."/>
            <person name="Medina N."/>
            <person name="Mellado R.P."/>
            <person name="Mizuno M."/>
            <person name="Moestl D."/>
            <person name="Nakai S."/>
            <person name="Noback M."/>
            <person name="Noone D."/>
            <person name="O'Reilly M."/>
            <person name="Ogawa K."/>
            <person name="Ogiwara A."/>
            <person name="Oudega B."/>
            <person name="Park S.-H."/>
            <person name="Parro V."/>
            <person name="Pohl T.M."/>
            <person name="Portetelle D."/>
            <person name="Porwollik S."/>
            <person name="Prescott A.M."/>
            <person name="Presecan E."/>
            <person name="Pujic P."/>
            <person name="Purnelle B."/>
            <person name="Rapoport G."/>
            <person name="Rey M."/>
            <person name="Reynolds S."/>
            <person name="Rieger M."/>
            <person name="Rivolta C."/>
            <person name="Rocha E."/>
            <person name="Roche B."/>
            <person name="Rose M."/>
            <person name="Sadaie Y."/>
            <person name="Sato T."/>
            <person name="Scanlan E."/>
            <person name="Schleich S."/>
            <person name="Schroeter R."/>
            <person name="Scoffone F."/>
            <person name="Sekiguchi J."/>
            <person name="Sekowska A."/>
            <person name="Seror S.J."/>
            <person name="Serror P."/>
            <person name="Shin B.-S."/>
            <person name="Soldo B."/>
            <person name="Sorokin A."/>
            <person name="Tacconi E."/>
            <person name="Takagi T."/>
            <person name="Takahashi H."/>
            <person name="Takemaru K."/>
            <person name="Takeuchi M."/>
            <person name="Tamakoshi A."/>
            <person name="Tanaka T."/>
            <person name="Terpstra P."/>
            <person name="Tognoni A."/>
            <person name="Tosato V."/>
            <person name="Uchiyama S."/>
            <person name="Vandenbol M."/>
            <person name="Vannier F."/>
            <person name="Vassarotti A."/>
            <person name="Viari A."/>
            <person name="Wambutt R."/>
            <person name="Wedler E."/>
            <person name="Wedler H."/>
            <person name="Weitzenegger T."/>
            <person name="Winters P."/>
            <person name="Wipat A."/>
            <person name="Yamamoto H."/>
            <person name="Yamane K."/>
            <person name="Yasumoto K."/>
            <person name="Yata K."/>
            <person name="Yoshida K."/>
            <person name="Yoshikawa H.-F."/>
            <person name="Zumstein E."/>
            <person name="Yoshikawa H."/>
            <person name="Danchin A."/>
        </authorList>
    </citation>
    <scope>NUCLEOTIDE SEQUENCE [LARGE SCALE GENOMIC DNA]</scope>
    <source>
        <strain>168</strain>
    </source>
</reference>
<reference key="3">
    <citation type="journal article" date="2000" name="J. Bacteriol.">
        <title>An operon for a putative ATP-binding cassette transport system involved in acetoin utilization of Bacillus subtilis.</title>
        <authorList>
            <person name="Yoshida K."/>
            <person name="Fujita Y."/>
            <person name="Ehrlich S.D."/>
        </authorList>
    </citation>
    <scope>FUNCTION</scope>
    <scope>DEVELOPMENTAL STAGE</scope>
    <scope>INDUCTION</scope>
</reference>
<protein>
    <recommendedName>
        <fullName>Probable ABC transporter permease YtrC</fullName>
    </recommendedName>
</protein>
<accession>O34898</accession>
<accession>Q795Q2</accession>